<comment type="similarity">
    <text evidence="1">To M.leprae ML2442.</text>
</comment>
<protein>
    <recommendedName>
        <fullName>Uncharacterized protein Mb0497</fullName>
    </recommendedName>
</protein>
<feature type="chain" id="PRO_0000103690" description="Uncharacterized protein Mb0497">
    <location>
        <begin position="1"/>
        <end position="183"/>
    </location>
</feature>
<proteinExistence type="predicted"/>
<evidence type="ECO:0000305" key="1"/>
<gene>
    <name type="ordered locus">BQ2027_MB0497</name>
</gene>
<accession>P64710</accession>
<accession>A0A1R3XXN1</accession>
<accession>Q11153</accession>
<accession>X2BF77</accession>
<sequence>MTSSLPTVQRVIQNALEVSQLKYSQHPRPGGAPPALIVELPGERKLKINTILSVGEHSVRVEAFVCRKPDENREDVYRFLLRRNRRLYGVAYTLDNVGDIYLVGQMALSAVDADEVDRVLGQVLEVVDSDFNALLELGFRSSIQREWQWRLSRGESLQNLQAFAHLRPTTMQSAQRDEKELGG</sequence>
<dbReference type="EMBL" id="LT708304">
    <property type="protein sequence ID" value="SIT99092.1"/>
    <property type="molecule type" value="Genomic_DNA"/>
</dbReference>
<dbReference type="RefSeq" id="NP_854160.1">
    <property type="nucleotide sequence ID" value="NC_002945.3"/>
</dbReference>
<dbReference type="RefSeq" id="WP_003402370.1">
    <property type="nucleotide sequence ID" value="NC_002945.4"/>
</dbReference>
<dbReference type="SMR" id="P64710"/>
<dbReference type="PATRIC" id="fig|233413.5.peg.539"/>
<dbReference type="Proteomes" id="UP000001419">
    <property type="component" value="Chromosome"/>
</dbReference>
<dbReference type="Gene3D" id="3.30.1460.10">
    <property type="match status" value="1"/>
</dbReference>
<dbReference type="InterPro" id="IPR019660">
    <property type="entry name" value="Put_sensory_transdc_reg_YbjN"/>
</dbReference>
<dbReference type="Pfam" id="PF10722">
    <property type="entry name" value="YbjN"/>
    <property type="match status" value="1"/>
</dbReference>
<dbReference type="SUPFAM" id="SSF69635">
    <property type="entry name" value="Type III secretory system chaperone-like"/>
    <property type="match status" value="1"/>
</dbReference>
<keyword id="KW-1185">Reference proteome</keyword>
<reference key="1">
    <citation type="journal article" date="2003" name="Proc. Natl. Acad. Sci. U.S.A.">
        <title>The complete genome sequence of Mycobacterium bovis.</title>
        <authorList>
            <person name="Garnier T."/>
            <person name="Eiglmeier K."/>
            <person name="Camus J.-C."/>
            <person name="Medina N."/>
            <person name="Mansoor H."/>
            <person name="Pryor M."/>
            <person name="Duthoy S."/>
            <person name="Grondin S."/>
            <person name="Lacroix C."/>
            <person name="Monsempe C."/>
            <person name="Simon S."/>
            <person name="Harris B."/>
            <person name="Atkin R."/>
            <person name="Doggett J."/>
            <person name="Mayes R."/>
            <person name="Keating L."/>
            <person name="Wheeler P.R."/>
            <person name="Parkhill J."/>
            <person name="Barrell B.G."/>
            <person name="Cole S.T."/>
            <person name="Gordon S.V."/>
            <person name="Hewinson R.G."/>
        </authorList>
    </citation>
    <scope>NUCLEOTIDE SEQUENCE [LARGE SCALE GENOMIC DNA]</scope>
    <source>
        <strain>ATCC BAA-935 / AF2122/97</strain>
    </source>
</reference>
<reference key="2">
    <citation type="journal article" date="2017" name="Genome Announc.">
        <title>Updated reference genome sequence and annotation of Mycobacterium bovis AF2122/97.</title>
        <authorList>
            <person name="Malone K.M."/>
            <person name="Farrell D."/>
            <person name="Stuber T.P."/>
            <person name="Schubert O.T."/>
            <person name="Aebersold R."/>
            <person name="Robbe-Austerman S."/>
            <person name="Gordon S.V."/>
        </authorList>
    </citation>
    <scope>NUCLEOTIDE SEQUENCE [LARGE SCALE GENOMIC DNA]</scope>
    <scope>GENOME REANNOTATION</scope>
    <source>
        <strain>ATCC BAA-935 / AF2122/97</strain>
    </source>
</reference>
<name>Y497_MYCBO</name>
<organism>
    <name type="scientific">Mycobacterium bovis (strain ATCC BAA-935 / AF2122/97)</name>
    <dbReference type="NCBI Taxonomy" id="233413"/>
    <lineage>
        <taxon>Bacteria</taxon>
        <taxon>Bacillati</taxon>
        <taxon>Actinomycetota</taxon>
        <taxon>Actinomycetes</taxon>
        <taxon>Mycobacteriales</taxon>
        <taxon>Mycobacteriaceae</taxon>
        <taxon>Mycobacterium</taxon>
        <taxon>Mycobacterium tuberculosis complex</taxon>
    </lineage>
</organism>